<keyword id="KW-0963">Cytoplasm</keyword>
<keyword id="KW-0274">FAD</keyword>
<keyword id="KW-0285">Flavoprotein</keyword>
<keyword id="KW-0520">NAD</keyword>
<keyword id="KW-0819">tRNA processing</keyword>
<comment type="function">
    <text evidence="1">NAD-binding protein involved in the addition of a carboxymethylaminomethyl (cmnm) group at the wobble position (U34) of certain tRNAs, forming tRNA-cmnm(5)s(2)U34.</text>
</comment>
<comment type="cofactor">
    <cofactor evidence="1">
        <name>FAD</name>
        <dbReference type="ChEBI" id="CHEBI:57692"/>
    </cofactor>
</comment>
<comment type="subunit">
    <text evidence="1">Homodimer. Heterotetramer of two MnmE and two MnmG subunits.</text>
</comment>
<comment type="subcellular location">
    <subcellularLocation>
        <location evidence="1">Cytoplasm</location>
    </subcellularLocation>
</comment>
<comment type="similarity">
    <text evidence="1">Belongs to the MnmG family.</text>
</comment>
<sequence length="629" mass="70457">MFYTENYDVIVIGGGHAGTEAALATARMKLKTLLLTHNIDTLGQMSCNPAIGGIGKGHLVKEIDAMGGLMATAADKAGIQFRTLNSSKGPAVRATRAQADRVLYRQVVRIALENQPNLDIFQQEVTDIILEKDSVTGIETKMGLKFRAKSVVLTAGTFLAGKIHIGLENYAGGRAGDPASVNLAKKLRDLNLRVNRLKTGTPPRIDARTINFDILAKQYGDEKLPVFSFMGSVEQHPEQIPCYITHTNDQTHDVIRKNLDRSPMYTGVIEGIGPRYCPSIEDKVIRFSDRNSHQIYLEPEGLTSNEVYPNGISTSLPFDVQMKIVNSMKGLEKARIVKPGYAIEYDYFDPRDLKSTLETKAISGLFFAGQINGTTGYEEAAAQGLLAGINAGLFVQEKESWFPRRDQAYIGVLVDDLCTVGTKEPYRVFTSRAEYRLLLREDNADIRLTSIARKLGLIDDIRWARFNQKMENIELERQRLRSIWLHPRSEYLNEANEILKSPLIREVNGEDLLRRPEINYQILTALTPFKPAMEDKEAVEQVEIAIKYQGYIEHQQEEIERQKRHENTAIPANFDYKNISGLSNEVCAKLEQYRPISIGQASRISGITPAAISILLVNLKKQGMLKRGE</sequence>
<evidence type="ECO:0000255" key="1">
    <source>
        <dbReference type="HAMAP-Rule" id="MF_00129"/>
    </source>
</evidence>
<protein>
    <recommendedName>
        <fullName evidence="1">tRNA uridine 5-carboxymethylaminomethyl modification enzyme MnmG</fullName>
    </recommendedName>
    <alternativeName>
        <fullName evidence="1">Glucose-inhibited division protein A</fullName>
    </alternativeName>
</protein>
<proteinExistence type="inferred from homology"/>
<dbReference type="EMBL" id="CP000436">
    <property type="protein sequence ID" value="ABI25973.1"/>
    <property type="molecule type" value="Genomic_DNA"/>
</dbReference>
<dbReference type="SMR" id="Q0I5W4"/>
<dbReference type="KEGG" id="hso:HS_1705"/>
<dbReference type="eggNOG" id="COG0445">
    <property type="taxonomic scope" value="Bacteria"/>
</dbReference>
<dbReference type="HOGENOM" id="CLU_007831_2_2_6"/>
<dbReference type="GO" id="GO:0005829">
    <property type="term" value="C:cytosol"/>
    <property type="evidence" value="ECO:0007669"/>
    <property type="project" value="TreeGrafter"/>
</dbReference>
<dbReference type="GO" id="GO:0050660">
    <property type="term" value="F:flavin adenine dinucleotide binding"/>
    <property type="evidence" value="ECO:0007669"/>
    <property type="project" value="UniProtKB-UniRule"/>
</dbReference>
<dbReference type="GO" id="GO:0030488">
    <property type="term" value="P:tRNA methylation"/>
    <property type="evidence" value="ECO:0007669"/>
    <property type="project" value="TreeGrafter"/>
</dbReference>
<dbReference type="GO" id="GO:0002098">
    <property type="term" value="P:tRNA wobble uridine modification"/>
    <property type="evidence" value="ECO:0007669"/>
    <property type="project" value="InterPro"/>
</dbReference>
<dbReference type="FunFam" id="1.10.10.1800:FF:000001">
    <property type="entry name" value="tRNA uridine 5-carboxymethylaminomethyl modification enzyme MnmG"/>
    <property type="match status" value="1"/>
</dbReference>
<dbReference type="FunFam" id="1.10.150.570:FF:000001">
    <property type="entry name" value="tRNA uridine 5-carboxymethylaminomethyl modification enzyme MnmG"/>
    <property type="match status" value="1"/>
</dbReference>
<dbReference type="FunFam" id="3.50.50.60:FF:000002">
    <property type="entry name" value="tRNA uridine 5-carboxymethylaminomethyl modification enzyme MnmG"/>
    <property type="match status" value="1"/>
</dbReference>
<dbReference type="FunFam" id="3.50.50.60:FF:000010">
    <property type="entry name" value="tRNA uridine 5-carboxymethylaminomethyl modification enzyme MnmG"/>
    <property type="match status" value="1"/>
</dbReference>
<dbReference type="Gene3D" id="3.50.50.60">
    <property type="entry name" value="FAD/NAD(P)-binding domain"/>
    <property type="match status" value="2"/>
</dbReference>
<dbReference type="Gene3D" id="1.10.150.570">
    <property type="entry name" value="GidA associated domain, C-terminal subdomain"/>
    <property type="match status" value="1"/>
</dbReference>
<dbReference type="Gene3D" id="1.10.10.1800">
    <property type="entry name" value="tRNA uridine 5-carboxymethylaminomethyl modification enzyme MnmG/GidA"/>
    <property type="match status" value="1"/>
</dbReference>
<dbReference type="HAMAP" id="MF_00129">
    <property type="entry name" value="MnmG_GidA"/>
    <property type="match status" value="1"/>
</dbReference>
<dbReference type="InterPro" id="IPR036188">
    <property type="entry name" value="FAD/NAD-bd_sf"/>
</dbReference>
<dbReference type="InterPro" id="IPR049312">
    <property type="entry name" value="GIDA_C_N"/>
</dbReference>
<dbReference type="InterPro" id="IPR004416">
    <property type="entry name" value="MnmG"/>
</dbReference>
<dbReference type="InterPro" id="IPR002218">
    <property type="entry name" value="MnmG-rel"/>
</dbReference>
<dbReference type="InterPro" id="IPR020595">
    <property type="entry name" value="MnmG-rel_CS"/>
</dbReference>
<dbReference type="InterPro" id="IPR026904">
    <property type="entry name" value="MnmG_C"/>
</dbReference>
<dbReference type="InterPro" id="IPR047001">
    <property type="entry name" value="MnmG_C_subdom"/>
</dbReference>
<dbReference type="InterPro" id="IPR044920">
    <property type="entry name" value="MnmG_C_subdom_sf"/>
</dbReference>
<dbReference type="InterPro" id="IPR040131">
    <property type="entry name" value="MnmG_N"/>
</dbReference>
<dbReference type="NCBIfam" id="TIGR00136">
    <property type="entry name" value="mnmG_gidA"/>
    <property type="match status" value="1"/>
</dbReference>
<dbReference type="PANTHER" id="PTHR11806">
    <property type="entry name" value="GLUCOSE INHIBITED DIVISION PROTEIN A"/>
    <property type="match status" value="1"/>
</dbReference>
<dbReference type="PANTHER" id="PTHR11806:SF0">
    <property type="entry name" value="PROTEIN MTO1 HOMOLOG, MITOCHONDRIAL"/>
    <property type="match status" value="1"/>
</dbReference>
<dbReference type="Pfam" id="PF01134">
    <property type="entry name" value="GIDA"/>
    <property type="match status" value="1"/>
</dbReference>
<dbReference type="Pfam" id="PF21680">
    <property type="entry name" value="GIDA_C_1st"/>
    <property type="match status" value="1"/>
</dbReference>
<dbReference type="Pfam" id="PF13932">
    <property type="entry name" value="SAM_GIDA_C"/>
    <property type="match status" value="1"/>
</dbReference>
<dbReference type="SMART" id="SM01228">
    <property type="entry name" value="GIDA_assoc_3"/>
    <property type="match status" value="1"/>
</dbReference>
<dbReference type="SUPFAM" id="SSF51905">
    <property type="entry name" value="FAD/NAD(P)-binding domain"/>
    <property type="match status" value="1"/>
</dbReference>
<dbReference type="PROSITE" id="PS01280">
    <property type="entry name" value="GIDA_1"/>
    <property type="match status" value="1"/>
</dbReference>
<dbReference type="PROSITE" id="PS01281">
    <property type="entry name" value="GIDA_2"/>
    <property type="match status" value="1"/>
</dbReference>
<name>MNMG_HISS1</name>
<organism>
    <name type="scientific">Histophilus somni (strain 129Pt)</name>
    <name type="common">Haemophilus somnus</name>
    <dbReference type="NCBI Taxonomy" id="205914"/>
    <lineage>
        <taxon>Bacteria</taxon>
        <taxon>Pseudomonadati</taxon>
        <taxon>Pseudomonadota</taxon>
        <taxon>Gammaproteobacteria</taxon>
        <taxon>Pasteurellales</taxon>
        <taxon>Pasteurellaceae</taxon>
        <taxon>Histophilus</taxon>
    </lineage>
</organism>
<gene>
    <name evidence="1" type="primary">mnmG</name>
    <name evidence="1" type="synonym">gidA</name>
    <name type="ordered locus">HS_1705</name>
</gene>
<feature type="chain" id="PRO_1000016607" description="tRNA uridine 5-carboxymethylaminomethyl modification enzyme MnmG">
    <location>
        <begin position="1"/>
        <end position="629"/>
    </location>
</feature>
<feature type="binding site" evidence="1">
    <location>
        <begin position="13"/>
        <end position="18"/>
    </location>
    <ligand>
        <name>FAD</name>
        <dbReference type="ChEBI" id="CHEBI:57692"/>
    </ligand>
</feature>
<feature type="binding site" evidence="1">
    <location>
        <position position="125"/>
    </location>
    <ligand>
        <name>FAD</name>
        <dbReference type="ChEBI" id="CHEBI:57692"/>
    </ligand>
</feature>
<feature type="binding site" evidence="1">
    <location>
        <position position="180"/>
    </location>
    <ligand>
        <name>FAD</name>
        <dbReference type="ChEBI" id="CHEBI:57692"/>
    </ligand>
</feature>
<feature type="binding site" evidence="1">
    <location>
        <begin position="273"/>
        <end position="287"/>
    </location>
    <ligand>
        <name>NAD(+)</name>
        <dbReference type="ChEBI" id="CHEBI:57540"/>
    </ligand>
</feature>
<feature type="binding site" evidence="1">
    <location>
        <position position="370"/>
    </location>
    <ligand>
        <name>FAD</name>
        <dbReference type="ChEBI" id="CHEBI:57692"/>
    </ligand>
</feature>
<reference key="1">
    <citation type="journal article" date="2007" name="J. Bacteriol.">
        <title>Complete genome sequence of Haemophilus somnus (Histophilus somni) strain 129Pt and comparison to Haemophilus ducreyi 35000HP and Haemophilus influenzae Rd.</title>
        <authorList>
            <person name="Challacombe J.F."/>
            <person name="Duncan A.J."/>
            <person name="Brettin T.S."/>
            <person name="Bruce D."/>
            <person name="Chertkov O."/>
            <person name="Detter J.C."/>
            <person name="Han C.S."/>
            <person name="Misra M."/>
            <person name="Richardson P."/>
            <person name="Tapia R."/>
            <person name="Thayer N."/>
            <person name="Xie G."/>
            <person name="Inzana T.J."/>
        </authorList>
    </citation>
    <scope>NUCLEOTIDE SEQUENCE [LARGE SCALE GENOMIC DNA]</scope>
    <source>
        <strain>129Pt</strain>
    </source>
</reference>
<accession>Q0I5W4</accession>